<feature type="chain" id="PRO_1000011759" description="GTPase Der">
    <location>
        <begin position="1"/>
        <end position="436"/>
    </location>
</feature>
<feature type="domain" description="EngA-type G 1">
    <location>
        <begin position="4"/>
        <end position="167"/>
    </location>
</feature>
<feature type="domain" description="EngA-type G 2">
    <location>
        <begin position="175"/>
        <end position="351"/>
    </location>
</feature>
<feature type="domain" description="KH-like" evidence="1">
    <location>
        <begin position="352"/>
        <end position="436"/>
    </location>
</feature>
<feature type="binding site" evidence="1">
    <location>
        <begin position="10"/>
        <end position="17"/>
    </location>
    <ligand>
        <name>GTP</name>
        <dbReference type="ChEBI" id="CHEBI:37565"/>
        <label>1</label>
    </ligand>
</feature>
<feature type="binding site" evidence="1">
    <location>
        <begin position="57"/>
        <end position="61"/>
    </location>
    <ligand>
        <name>GTP</name>
        <dbReference type="ChEBI" id="CHEBI:37565"/>
        <label>1</label>
    </ligand>
</feature>
<feature type="binding site" evidence="1">
    <location>
        <begin position="119"/>
        <end position="122"/>
    </location>
    <ligand>
        <name>GTP</name>
        <dbReference type="ChEBI" id="CHEBI:37565"/>
        <label>1</label>
    </ligand>
</feature>
<feature type="binding site" evidence="1">
    <location>
        <begin position="181"/>
        <end position="188"/>
    </location>
    <ligand>
        <name>GTP</name>
        <dbReference type="ChEBI" id="CHEBI:37565"/>
        <label>2</label>
    </ligand>
</feature>
<feature type="binding site" evidence="1">
    <location>
        <begin position="229"/>
        <end position="233"/>
    </location>
    <ligand>
        <name>GTP</name>
        <dbReference type="ChEBI" id="CHEBI:37565"/>
        <label>2</label>
    </ligand>
</feature>
<feature type="binding site" evidence="1">
    <location>
        <begin position="294"/>
        <end position="297"/>
    </location>
    <ligand>
        <name>GTP</name>
        <dbReference type="ChEBI" id="CHEBI:37565"/>
        <label>2</label>
    </ligand>
</feature>
<accession>A4W3F7</accession>
<dbReference type="EMBL" id="CP000408">
    <property type="protein sequence ID" value="ABP92896.1"/>
    <property type="molecule type" value="Genomic_DNA"/>
</dbReference>
<dbReference type="SMR" id="A4W3F7"/>
<dbReference type="KEGG" id="ssv:SSU98_1738"/>
<dbReference type="HOGENOM" id="CLU_016077_6_2_9"/>
<dbReference type="GO" id="GO:0005525">
    <property type="term" value="F:GTP binding"/>
    <property type="evidence" value="ECO:0007669"/>
    <property type="project" value="UniProtKB-UniRule"/>
</dbReference>
<dbReference type="GO" id="GO:0043022">
    <property type="term" value="F:ribosome binding"/>
    <property type="evidence" value="ECO:0007669"/>
    <property type="project" value="TreeGrafter"/>
</dbReference>
<dbReference type="GO" id="GO:0042254">
    <property type="term" value="P:ribosome biogenesis"/>
    <property type="evidence" value="ECO:0007669"/>
    <property type="project" value="UniProtKB-KW"/>
</dbReference>
<dbReference type="CDD" id="cd01894">
    <property type="entry name" value="EngA1"/>
    <property type="match status" value="1"/>
</dbReference>
<dbReference type="CDD" id="cd01895">
    <property type="entry name" value="EngA2"/>
    <property type="match status" value="1"/>
</dbReference>
<dbReference type="FunFam" id="3.30.300.20:FF:000004">
    <property type="entry name" value="GTPase Der"/>
    <property type="match status" value="1"/>
</dbReference>
<dbReference type="FunFam" id="3.40.50.300:FF:000040">
    <property type="entry name" value="GTPase Der"/>
    <property type="match status" value="1"/>
</dbReference>
<dbReference type="FunFam" id="3.40.50.300:FF:000057">
    <property type="entry name" value="GTPase Der"/>
    <property type="match status" value="1"/>
</dbReference>
<dbReference type="Gene3D" id="3.30.300.20">
    <property type="match status" value="1"/>
</dbReference>
<dbReference type="Gene3D" id="3.40.50.300">
    <property type="entry name" value="P-loop containing nucleotide triphosphate hydrolases"/>
    <property type="match status" value="2"/>
</dbReference>
<dbReference type="HAMAP" id="MF_00195">
    <property type="entry name" value="GTPase_Der"/>
    <property type="match status" value="1"/>
</dbReference>
<dbReference type="InterPro" id="IPR031166">
    <property type="entry name" value="G_ENGA"/>
</dbReference>
<dbReference type="InterPro" id="IPR006073">
    <property type="entry name" value="GTP-bd"/>
</dbReference>
<dbReference type="InterPro" id="IPR016484">
    <property type="entry name" value="GTPase_Der"/>
</dbReference>
<dbReference type="InterPro" id="IPR032859">
    <property type="entry name" value="KH_dom-like"/>
</dbReference>
<dbReference type="InterPro" id="IPR015946">
    <property type="entry name" value="KH_dom-like_a/b"/>
</dbReference>
<dbReference type="InterPro" id="IPR027417">
    <property type="entry name" value="P-loop_NTPase"/>
</dbReference>
<dbReference type="InterPro" id="IPR005225">
    <property type="entry name" value="Small_GTP-bd"/>
</dbReference>
<dbReference type="NCBIfam" id="TIGR03594">
    <property type="entry name" value="GTPase_EngA"/>
    <property type="match status" value="1"/>
</dbReference>
<dbReference type="NCBIfam" id="TIGR00231">
    <property type="entry name" value="small_GTP"/>
    <property type="match status" value="2"/>
</dbReference>
<dbReference type="PANTHER" id="PTHR43834">
    <property type="entry name" value="GTPASE DER"/>
    <property type="match status" value="1"/>
</dbReference>
<dbReference type="PANTHER" id="PTHR43834:SF6">
    <property type="entry name" value="GTPASE DER"/>
    <property type="match status" value="1"/>
</dbReference>
<dbReference type="Pfam" id="PF14714">
    <property type="entry name" value="KH_dom-like"/>
    <property type="match status" value="1"/>
</dbReference>
<dbReference type="Pfam" id="PF01926">
    <property type="entry name" value="MMR_HSR1"/>
    <property type="match status" value="2"/>
</dbReference>
<dbReference type="PIRSF" id="PIRSF006485">
    <property type="entry name" value="GTP-binding_EngA"/>
    <property type="match status" value="1"/>
</dbReference>
<dbReference type="PRINTS" id="PR00326">
    <property type="entry name" value="GTP1OBG"/>
</dbReference>
<dbReference type="SUPFAM" id="SSF52540">
    <property type="entry name" value="P-loop containing nucleoside triphosphate hydrolases"/>
    <property type="match status" value="2"/>
</dbReference>
<dbReference type="PROSITE" id="PS51712">
    <property type="entry name" value="G_ENGA"/>
    <property type="match status" value="2"/>
</dbReference>
<protein>
    <recommendedName>
        <fullName evidence="1">GTPase Der</fullName>
    </recommendedName>
    <alternativeName>
        <fullName evidence="1">GTP-binding protein EngA</fullName>
    </alternativeName>
</protein>
<reference key="1">
    <citation type="journal article" date="2007" name="PLoS ONE">
        <title>A glimpse of streptococcal toxic shock syndrome from comparative genomics of S. suis 2 Chinese isolates.</title>
        <authorList>
            <person name="Chen C."/>
            <person name="Tang J."/>
            <person name="Dong W."/>
            <person name="Wang C."/>
            <person name="Feng Y."/>
            <person name="Wang J."/>
            <person name="Zheng F."/>
            <person name="Pan X."/>
            <person name="Liu D."/>
            <person name="Li M."/>
            <person name="Song Y."/>
            <person name="Zhu X."/>
            <person name="Sun H."/>
            <person name="Feng T."/>
            <person name="Guo Z."/>
            <person name="Ju A."/>
            <person name="Ge J."/>
            <person name="Dong Y."/>
            <person name="Sun W."/>
            <person name="Jiang Y."/>
            <person name="Wang J."/>
            <person name="Yan J."/>
            <person name="Yang H."/>
            <person name="Wang X."/>
            <person name="Gao G.F."/>
            <person name="Yang R."/>
            <person name="Wang J."/>
            <person name="Yu J."/>
        </authorList>
    </citation>
    <scope>NUCLEOTIDE SEQUENCE [LARGE SCALE GENOMIC DNA]</scope>
    <source>
        <strain>98HAH33</strain>
    </source>
</reference>
<evidence type="ECO:0000255" key="1">
    <source>
        <dbReference type="HAMAP-Rule" id="MF_00195"/>
    </source>
</evidence>
<comment type="function">
    <text evidence="1">GTPase that plays an essential role in the late steps of ribosome biogenesis.</text>
</comment>
<comment type="subunit">
    <text evidence="1">Associates with the 50S ribosomal subunit.</text>
</comment>
<comment type="similarity">
    <text evidence="1">Belongs to the TRAFAC class TrmE-Era-EngA-EngB-Septin-like GTPase superfamily. EngA (Der) GTPase family.</text>
</comment>
<keyword id="KW-0342">GTP-binding</keyword>
<keyword id="KW-0547">Nucleotide-binding</keyword>
<keyword id="KW-0677">Repeat</keyword>
<keyword id="KW-0690">Ribosome biogenesis</keyword>
<name>DER_STRS2</name>
<organism>
    <name type="scientific">Streptococcus suis (strain 98HAH33)</name>
    <dbReference type="NCBI Taxonomy" id="391296"/>
    <lineage>
        <taxon>Bacteria</taxon>
        <taxon>Bacillati</taxon>
        <taxon>Bacillota</taxon>
        <taxon>Bacilli</taxon>
        <taxon>Lactobacillales</taxon>
        <taxon>Streptococcaceae</taxon>
        <taxon>Streptococcus</taxon>
    </lineage>
</organism>
<proteinExistence type="inferred from homology"/>
<gene>
    <name evidence="1" type="primary">der</name>
    <name type="synonym">engA</name>
    <name type="ordered locus">SSU98_1738</name>
</gene>
<sequence length="436" mass="48988">MALPTIAIVGRPNVGKSTLFNRIAGERISIVEDVEGVTRDRIYATGEWLNRKFSLIDTGGIDDVDAPFMEQIKHQAEIAMDEADVIVFVVSGKEGVTDADEYVSRILYKTNKPVILVVNKVDNPEMRNDIYDFYSLGLGDPYPVSSVHGIGTGDVLDAIIENLPAQEAEENPDIIKFSLIGRPNVGKSSLINAILGEERVIASPVAGTTRDAIDTHFTDPEGQEFTMIDTAGMRKSGKVYENTEKYSVMRAMRAIERSDVILMVINAEEGIREYDKRIAGFAHEAGKGMIIVVNKWDTLEKDNHTMKQWEDDIRDQFQYLSYAPIIFVSALTKQRLHKLPEMIKAISESQNTRIPSAVLNDVIMDAIAINPTPTDKGKRLKIFYATQVATKPPTFVVFVNEEELMHFSYMRFLENQIRKAFVFEGTPIHLIARKRK</sequence>